<gene>
    <name type="ordered locus">KLLA0C12716g</name>
</gene>
<dbReference type="EMBL" id="CR382123">
    <property type="protein sequence ID" value="CAH01617.1"/>
    <property type="molecule type" value="Genomic_DNA"/>
</dbReference>
<dbReference type="RefSeq" id="XP_452766.1">
    <property type="nucleotide sequence ID" value="XM_452766.1"/>
</dbReference>
<dbReference type="SMR" id="Q6CTH3"/>
<dbReference type="FunCoup" id="Q6CTH3">
    <property type="interactions" value="913"/>
</dbReference>
<dbReference type="STRING" id="284590.Q6CTH3"/>
<dbReference type="PaxDb" id="284590-Q6CTH3"/>
<dbReference type="KEGG" id="kla:KLLA0_C12716g"/>
<dbReference type="eggNOG" id="KOG1727">
    <property type="taxonomic scope" value="Eukaryota"/>
</dbReference>
<dbReference type="HOGENOM" id="CLU_095877_0_0_1"/>
<dbReference type="InParanoid" id="Q6CTH3"/>
<dbReference type="Proteomes" id="UP000000598">
    <property type="component" value="Chromosome C"/>
</dbReference>
<dbReference type="GO" id="GO:0005737">
    <property type="term" value="C:cytoplasm"/>
    <property type="evidence" value="ECO:0007669"/>
    <property type="project" value="UniProtKB-KW"/>
</dbReference>
<dbReference type="GO" id="GO:0005874">
    <property type="term" value="C:microtubule"/>
    <property type="evidence" value="ECO:0007669"/>
    <property type="project" value="UniProtKB-KW"/>
</dbReference>
<dbReference type="GO" id="GO:0005509">
    <property type="term" value="F:calcium ion binding"/>
    <property type="evidence" value="ECO:0007669"/>
    <property type="project" value="TreeGrafter"/>
</dbReference>
<dbReference type="GO" id="GO:0006412">
    <property type="term" value="P:translation"/>
    <property type="evidence" value="ECO:0007669"/>
    <property type="project" value="UniProtKB-KW"/>
</dbReference>
<dbReference type="FunFam" id="2.170.150.10:FF:000002">
    <property type="entry name" value="Translationally-controlled tumor protein homolog"/>
    <property type="match status" value="1"/>
</dbReference>
<dbReference type="Gene3D" id="2.170.150.10">
    <property type="entry name" value="Metal Binding Protein, Guanine Nucleotide Exchange Factor, Chain A"/>
    <property type="match status" value="1"/>
</dbReference>
<dbReference type="InterPro" id="IPR011057">
    <property type="entry name" value="Mss4-like_sf"/>
</dbReference>
<dbReference type="InterPro" id="IPR011323">
    <property type="entry name" value="Mss4/transl-control_tumour"/>
</dbReference>
<dbReference type="InterPro" id="IPR034737">
    <property type="entry name" value="TCTP"/>
</dbReference>
<dbReference type="InterPro" id="IPR018103">
    <property type="entry name" value="Translation_control_tumour_CS"/>
</dbReference>
<dbReference type="InterPro" id="IPR018105">
    <property type="entry name" value="Translational_control_tumour_p"/>
</dbReference>
<dbReference type="PANTHER" id="PTHR11991">
    <property type="entry name" value="TRANSLATIONALLY CONTROLLED TUMOR PROTEIN-RELATED"/>
    <property type="match status" value="1"/>
</dbReference>
<dbReference type="PANTHER" id="PTHR11991:SF0">
    <property type="entry name" value="TRANSLATIONALLY-CONTROLLED TUMOR PROTEIN"/>
    <property type="match status" value="1"/>
</dbReference>
<dbReference type="Pfam" id="PF00838">
    <property type="entry name" value="TCTP"/>
    <property type="match status" value="1"/>
</dbReference>
<dbReference type="PRINTS" id="PR01653">
    <property type="entry name" value="TCTPROTEIN"/>
</dbReference>
<dbReference type="SUPFAM" id="SSF51316">
    <property type="entry name" value="Mss4-like"/>
    <property type="match status" value="1"/>
</dbReference>
<dbReference type="PROSITE" id="PS01002">
    <property type="entry name" value="TCTP_1"/>
    <property type="match status" value="1"/>
</dbReference>
<dbReference type="PROSITE" id="PS01003">
    <property type="entry name" value="TCTP_2"/>
    <property type="match status" value="1"/>
</dbReference>
<dbReference type="PROSITE" id="PS51797">
    <property type="entry name" value="TCTP_3"/>
    <property type="match status" value="1"/>
</dbReference>
<feature type="chain" id="PRO_0000252325" description="Translationally-controlled tumor protein homolog">
    <location>
        <begin position="1"/>
        <end position="167"/>
    </location>
</feature>
<feature type="domain" description="TCTP" evidence="2">
    <location>
        <begin position="1"/>
        <end position="167"/>
    </location>
</feature>
<comment type="function">
    <text evidence="1">Involved in protein synthesis. Involved in microtubule stabilization (By similarity).</text>
</comment>
<comment type="subcellular location">
    <subcellularLocation>
        <location evidence="1">Cytoplasm</location>
        <location evidence="1">Cytoskeleton</location>
    </subcellularLocation>
</comment>
<comment type="similarity">
    <text evidence="2">Belongs to the TCTP family.</text>
</comment>
<evidence type="ECO:0000250" key="1"/>
<evidence type="ECO:0000255" key="2">
    <source>
        <dbReference type="PROSITE-ProRule" id="PRU01133"/>
    </source>
</evidence>
<keyword id="KW-0963">Cytoplasm</keyword>
<keyword id="KW-0206">Cytoskeleton</keyword>
<keyword id="KW-0493">Microtubule</keyword>
<keyword id="KW-0648">Protein biosynthesis</keyword>
<keyword id="KW-1185">Reference proteome</keyword>
<accession>Q6CTH3</accession>
<reference key="1">
    <citation type="journal article" date="2004" name="Nature">
        <title>Genome evolution in yeasts.</title>
        <authorList>
            <person name="Dujon B."/>
            <person name="Sherman D."/>
            <person name="Fischer G."/>
            <person name="Durrens P."/>
            <person name="Casaregola S."/>
            <person name="Lafontaine I."/>
            <person name="de Montigny J."/>
            <person name="Marck C."/>
            <person name="Neuveglise C."/>
            <person name="Talla E."/>
            <person name="Goffard N."/>
            <person name="Frangeul L."/>
            <person name="Aigle M."/>
            <person name="Anthouard V."/>
            <person name="Babour A."/>
            <person name="Barbe V."/>
            <person name="Barnay S."/>
            <person name="Blanchin S."/>
            <person name="Beckerich J.-M."/>
            <person name="Beyne E."/>
            <person name="Bleykasten C."/>
            <person name="Boisrame A."/>
            <person name="Boyer J."/>
            <person name="Cattolico L."/>
            <person name="Confanioleri F."/>
            <person name="de Daruvar A."/>
            <person name="Despons L."/>
            <person name="Fabre E."/>
            <person name="Fairhead C."/>
            <person name="Ferry-Dumazet H."/>
            <person name="Groppi A."/>
            <person name="Hantraye F."/>
            <person name="Hennequin C."/>
            <person name="Jauniaux N."/>
            <person name="Joyet P."/>
            <person name="Kachouri R."/>
            <person name="Kerrest A."/>
            <person name="Koszul R."/>
            <person name="Lemaire M."/>
            <person name="Lesur I."/>
            <person name="Ma L."/>
            <person name="Muller H."/>
            <person name="Nicaud J.-M."/>
            <person name="Nikolski M."/>
            <person name="Oztas S."/>
            <person name="Ozier-Kalogeropoulos O."/>
            <person name="Pellenz S."/>
            <person name="Potier S."/>
            <person name="Richard G.-F."/>
            <person name="Straub M.-L."/>
            <person name="Suleau A."/>
            <person name="Swennen D."/>
            <person name="Tekaia F."/>
            <person name="Wesolowski-Louvel M."/>
            <person name="Westhof E."/>
            <person name="Wirth B."/>
            <person name="Zeniou-Meyer M."/>
            <person name="Zivanovic Y."/>
            <person name="Bolotin-Fukuhara M."/>
            <person name="Thierry A."/>
            <person name="Bouchier C."/>
            <person name="Caudron B."/>
            <person name="Scarpelli C."/>
            <person name="Gaillardin C."/>
            <person name="Weissenbach J."/>
            <person name="Wincker P."/>
            <person name="Souciet J.-L."/>
        </authorList>
    </citation>
    <scope>NUCLEOTIDE SEQUENCE [LARGE SCALE GENOMIC DNA]</scope>
    <source>
        <strain>ATCC 8585 / CBS 2359 / DSM 70799 / NBRC 1267 / NRRL Y-1140 / WM37</strain>
    </source>
</reference>
<sequence>MIIYTDIISGDELLSDAYDLKLVDGVIYEADCDMVKVGGDNIDIGANPSAEDGGDDVEDGTELVNNVVHSFRLQQTAFDKKSFLTYIKGYMKEIKGRLQESNPDEVSVFEKGAQAYVKKVIGSFKDWEFFTGESMDPDGMLVLLNYREDGTTPFVAIWKHGVKAEKI</sequence>
<organism>
    <name type="scientific">Kluyveromyces lactis (strain ATCC 8585 / CBS 2359 / DSM 70799 / NBRC 1267 / NRRL Y-1140 / WM37)</name>
    <name type="common">Yeast</name>
    <name type="synonym">Candida sphaerica</name>
    <dbReference type="NCBI Taxonomy" id="284590"/>
    <lineage>
        <taxon>Eukaryota</taxon>
        <taxon>Fungi</taxon>
        <taxon>Dikarya</taxon>
        <taxon>Ascomycota</taxon>
        <taxon>Saccharomycotina</taxon>
        <taxon>Saccharomycetes</taxon>
        <taxon>Saccharomycetales</taxon>
        <taxon>Saccharomycetaceae</taxon>
        <taxon>Kluyveromyces</taxon>
    </lineage>
</organism>
<proteinExistence type="inferred from homology"/>
<name>TCTP_KLULA</name>
<protein>
    <recommendedName>
        <fullName>Translationally-controlled tumor protein homolog</fullName>
        <shortName>TCTP</shortName>
    </recommendedName>
</protein>